<evidence type="ECO:0000255" key="1">
    <source>
        <dbReference type="HAMAP-Rule" id="MF_01353"/>
    </source>
</evidence>
<protein>
    <recommendedName>
        <fullName evidence="1">NAD(P)H-quinone oxidoreductase subunit N</fullName>
        <ecNumber evidence="1">7.1.1.-</ecNumber>
    </recommendedName>
    <alternativeName>
        <fullName evidence="1">NAD(P)H dehydrogenase I subunit N</fullName>
        <shortName evidence="1">NDH-1 subunit N</shortName>
        <shortName evidence="1">NDH-N</shortName>
    </alternativeName>
</protein>
<comment type="function">
    <text evidence="1">NDH-1 shuttles electrons from an unknown electron donor, via FMN and iron-sulfur (Fe-S) centers, to quinones in the respiratory and/or the photosynthetic chain. The immediate electron acceptor for the enzyme in this species is believed to be plastoquinone. Couples the redox reaction to proton translocation, and thus conserves the redox energy in a proton gradient. Cyanobacterial NDH-1 also plays a role in inorganic carbon-concentration.</text>
</comment>
<comment type="catalytic activity">
    <reaction evidence="1">
        <text>a plastoquinone + NADH + (n+1) H(+)(in) = a plastoquinol + NAD(+) + n H(+)(out)</text>
        <dbReference type="Rhea" id="RHEA:42608"/>
        <dbReference type="Rhea" id="RHEA-COMP:9561"/>
        <dbReference type="Rhea" id="RHEA-COMP:9562"/>
        <dbReference type="ChEBI" id="CHEBI:15378"/>
        <dbReference type="ChEBI" id="CHEBI:17757"/>
        <dbReference type="ChEBI" id="CHEBI:57540"/>
        <dbReference type="ChEBI" id="CHEBI:57945"/>
        <dbReference type="ChEBI" id="CHEBI:62192"/>
    </reaction>
</comment>
<comment type="catalytic activity">
    <reaction evidence="1">
        <text>a plastoquinone + NADPH + (n+1) H(+)(in) = a plastoquinol + NADP(+) + n H(+)(out)</text>
        <dbReference type="Rhea" id="RHEA:42612"/>
        <dbReference type="Rhea" id="RHEA-COMP:9561"/>
        <dbReference type="Rhea" id="RHEA-COMP:9562"/>
        <dbReference type="ChEBI" id="CHEBI:15378"/>
        <dbReference type="ChEBI" id="CHEBI:17757"/>
        <dbReference type="ChEBI" id="CHEBI:57783"/>
        <dbReference type="ChEBI" id="CHEBI:58349"/>
        <dbReference type="ChEBI" id="CHEBI:62192"/>
    </reaction>
</comment>
<comment type="subunit">
    <text evidence="1">NDH-1 can be composed of about 15 different subunits; different subcomplexes with different compositions have been identified which probably have different functions.</text>
</comment>
<comment type="subcellular location">
    <subcellularLocation>
        <location evidence="1">Cellular thylakoid membrane</location>
        <topology evidence="1">Peripheral membrane protein</topology>
        <orientation evidence="1">Cytoplasmic side</orientation>
    </subcellularLocation>
</comment>
<comment type="similarity">
    <text evidence="1">Belongs to the complex I NdhN subunit family.</text>
</comment>
<feature type="chain" id="PRO_0000352212" description="NAD(P)H-quinone oxidoreductase subunit N">
    <location>
        <begin position="1"/>
        <end position="151"/>
    </location>
</feature>
<name>NDHN_ACAM1</name>
<gene>
    <name evidence="1" type="primary">ndhN</name>
    <name type="ordered locus">AM1_1651</name>
</gene>
<reference key="1">
    <citation type="journal article" date="2008" name="Proc. Natl. Acad. Sci. U.S.A.">
        <title>Niche adaptation and genome expansion in the chlorophyll d-producing cyanobacterium Acaryochloris marina.</title>
        <authorList>
            <person name="Swingley W.D."/>
            <person name="Chen M."/>
            <person name="Cheung P.C."/>
            <person name="Conrad A.L."/>
            <person name="Dejesa L.C."/>
            <person name="Hao J."/>
            <person name="Honchak B.M."/>
            <person name="Karbach L.E."/>
            <person name="Kurdoglu A."/>
            <person name="Lahiri S."/>
            <person name="Mastrian S.D."/>
            <person name="Miyashita H."/>
            <person name="Page L."/>
            <person name="Ramakrishna P."/>
            <person name="Satoh S."/>
            <person name="Sattley W.M."/>
            <person name="Shimada Y."/>
            <person name="Taylor H.L."/>
            <person name="Tomo T."/>
            <person name="Tsuchiya T."/>
            <person name="Wang Z.T."/>
            <person name="Raymond J."/>
            <person name="Mimuro M."/>
            <person name="Blankenship R.E."/>
            <person name="Touchman J.W."/>
        </authorList>
    </citation>
    <scope>NUCLEOTIDE SEQUENCE [LARGE SCALE GENOMIC DNA]</scope>
    <source>
        <strain>MBIC 11017</strain>
    </source>
</reference>
<accession>B0CA85</accession>
<proteinExistence type="inferred from homology"/>
<sequence>MPLLATGKKFIRTIEQSGAVGIYVPSEGGFEGRYKRRLRATGYLTLFVSAPGMGDLASYFTDVHGVRPPHLGKNQIRTYFLPPFVTYQLENLPPQAKGLALWLYDGKRLAKQELAYLSAITASEPRLKVVVELGGARSFEWQPLSDIVAAA</sequence>
<organism>
    <name type="scientific">Acaryochloris marina (strain MBIC 11017)</name>
    <dbReference type="NCBI Taxonomy" id="329726"/>
    <lineage>
        <taxon>Bacteria</taxon>
        <taxon>Bacillati</taxon>
        <taxon>Cyanobacteriota</taxon>
        <taxon>Cyanophyceae</taxon>
        <taxon>Acaryochloridales</taxon>
        <taxon>Acaryochloridaceae</taxon>
        <taxon>Acaryochloris</taxon>
    </lineage>
</organism>
<keyword id="KW-0472">Membrane</keyword>
<keyword id="KW-0520">NAD</keyword>
<keyword id="KW-0521">NADP</keyword>
<keyword id="KW-0618">Plastoquinone</keyword>
<keyword id="KW-0874">Quinone</keyword>
<keyword id="KW-1185">Reference proteome</keyword>
<keyword id="KW-0793">Thylakoid</keyword>
<keyword id="KW-1278">Translocase</keyword>
<keyword id="KW-0813">Transport</keyword>
<dbReference type="EC" id="7.1.1.-" evidence="1"/>
<dbReference type="EMBL" id="CP000828">
    <property type="protein sequence ID" value="ABW26672.1"/>
    <property type="molecule type" value="Genomic_DNA"/>
</dbReference>
<dbReference type="RefSeq" id="WP_012162191.1">
    <property type="nucleotide sequence ID" value="NC_009925.1"/>
</dbReference>
<dbReference type="SMR" id="B0CA85"/>
<dbReference type="STRING" id="329726.AM1_1651"/>
<dbReference type="KEGG" id="amr:AM1_1651"/>
<dbReference type="eggNOG" id="ENOG502ZBMI">
    <property type="taxonomic scope" value="Bacteria"/>
</dbReference>
<dbReference type="HOGENOM" id="CLU_087432_0_0_3"/>
<dbReference type="OrthoDB" id="510798at2"/>
<dbReference type="Proteomes" id="UP000000268">
    <property type="component" value="Chromosome"/>
</dbReference>
<dbReference type="GO" id="GO:0031676">
    <property type="term" value="C:plasma membrane-derived thylakoid membrane"/>
    <property type="evidence" value="ECO:0007669"/>
    <property type="project" value="UniProtKB-SubCell"/>
</dbReference>
<dbReference type="GO" id="GO:0016655">
    <property type="term" value="F:oxidoreductase activity, acting on NAD(P)H, quinone or similar compound as acceptor"/>
    <property type="evidence" value="ECO:0007669"/>
    <property type="project" value="UniProtKB-UniRule"/>
</dbReference>
<dbReference type="GO" id="GO:0048038">
    <property type="term" value="F:quinone binding"/>
    <property type="evidence" value="ECO:0007669"/>
    <property type="project" value="UniProtKB-KW"/>
</dbReference>
<dbReference type="HAMAP" id="MF_01353">
    <property type="entry name" value="NDH1_NDH1N"/>
    <property type="match status" value="1"/>
</dbReference>
<dbReference type="InterPro" id="IPR020874">
    <property type="entry name" value="NAD(P)H-quinone_OxRdtase_su_N"/>
</dbReference>
<dbReference type="PANTHER" id="PTHR35515">
    <property type="entry name" value="NAD(P)H-QUINONE OXIDOREDUCTASE SUBUNIT N, CHLOROPLASTIC"/>
    <property type="match status" value="1"/>
</dbReference>
<dbReference type="PANTHER" id="PTHR35515:SF1">
    <property type="entry name" value="NAD(P)H-QUINONE OXIDOREDUCTASE SUBUNIT N, CHLOROPLASTIC"/>
    <property type="match status" value="1"/>
</dbReference>
<dbReference type="Pfam" id="PF11909">
    <property type="entry name" value="NdhN"/>
    <property type="match status" value="1"/>
</dbReference>